<comment type="function">
    <text evidence="1">DNA ligase that catalyzes the formation of phosphodiester linkages between 5'-phosphoryl and 3'-hydroxyl groups in double-stranded DNA using NAD as a coenzyme and as the energy source for the reaction. It is essential for DNA replication and repair of damaged DNA.</text>
</comment>
<comment type="catalytic activity">
    <reaction evidence="1">
        <text>NAD(+) + (deoxyribonucleotide)n-3'-hydroxyl + 5'-phospho-(deoxyribonucleotide)m = (deoxyribonucleotide)n+m + AMP + beta-nicotinamide D-nucleotide.</text>
        <dbReference type="EC" id="6.5.1.2"/>
    </reaction>
</comment>
<comment type="cofactor">
    <cofactor evidence="1">
        <name>Mg(2+)</name>
        <dbReference type="ChEBI" id="CHEBI:18420"/>
    </cofactor>
    <cofactor evidence="1">
        <name>Mn(2+)</name>
        <dbReference type="ChEBI" id="CHEBI:29035"/>
    </cofactor>
</comment>
<comment type="similarity">
    <text evidence="1">Belongs to the NAD-dependent DNA ligase family. LigA subfamily.</text>
</comment>
<evidence type="ECO:0000255" key="1">
    <source>
        <dbReference type="HAMAP-Rule" id="MF_01588"/>
    </source>
</evidence>
<protein>
    <recommendedName>
        <fullName evidence="1">DNA ligase</fullName>
        <ecNumber evidence="1">6.5.1.2</ecNumber>
    </recommendedName>
    <alternativeName>
        <fullName evidence="1">Polydeoxyribonucleotide synthase [NAD(+)]</fullName>
    </alternativeName>
</protein>
<gene>
    <name evidence="1" type="primary">ligA</name>
    <name type="ordered locus">Franean1_1082</name>
</gene>
<keyword id="KW-0227">DNA damage</keyword>
<keyword id="KW-0234">DNA repair</keyword>
<keyword id="KW-0235">DNA replication</keyword>
<keyword id="KW-0436">Ligase</keyword>
<keyword id="KW-0460">Magnesium</keyword>
<keyword id="KW-0464">Manganese</keyword>
<keyword id="KW-0479">Metal-binding</keyword>
<keyword id="KW-0520">NAD</keyword>
<keyword id="KW-0862">Zinc</keyword>
<reference key="1">
    <citation type="journal article" date="2007" name="Genome Res.">
        <title>Genome characteristics of facultatively symbiotic Frankia sp. strains reflect host range and host plant biogeography.</title>
        <authorList>
            <person name="Normand P."/>
            <person name="Lapierre P."/>
            <person name="Tisa L.S."/>
            <person name="Gogarten J.P."/>
            <person name="Alloisio N."/>
            <person name="Bagnarol E."/>
            <person name="Bassi C.A."/>
            <person name="Berry A.M."/>
            <person name="Bickhart D.M."/>
            <person name="Choisne N."/>
            <person name="Couloux A."/>
            <person name="Cournoyer B."/>
            <person name="Cruveiller S."/>
            <person name="Daubin V."/>
            <person name="Demange N."/>
            <person name="Francino M.P."/>
            <person name="Goltsman E."/>
            <person name="Huang Y."/>
            <person name="Kopp O.R."/>
            <person name="Labarre L."/>
            <person name="Lapidus A."/>
            <person name="Lavire C."/>
            <person name="Marechal J."/>
            <person name="Martinez M."/>
            <person name="Mastronunzio J.E."/>
            <person name="Mullin B.C."/>
            <person name="Niemann J."/>
            <person name="Pujic P."/>
            <person name="Rawnsley T."/>
            <person name="Rouy Z."/>
            <person name="Schenowitz C."/>
            <person name="Sellstedt A."/>
            <person name="Tavares F."/>
            <person name="Tomkins J.P."/>
            <person name="Vallenet D."/>
            <person name="Valverde C."/>
            <person name="Wall L.G."/>
            <person name="Wang Y."/>
            <person name="Medigue C."/>
            <person name="Benson D.R."/>
        </authorList>
    </citation>
    <scope>NUCLEOTIDE SEQUENCE [LARGE SCALE GENOMIC DNA]</scope>
    <source>
        <strain>EAN1pec</strain>
    </source>
</reference>
<name>DNLJ_PARS2</name>
<organism>
    <name type="scientific">Parafrankia sp. (strain EAN1pec)</name>
    <dbReference type="NCBI Taxonomy" id="298653"/>
    <lineage>
        <taxon>Bacteria</taxon>
        <taxon>Bacillati</taxon>
        <taxon>Actinomycetota</taxon>
        <taxon>Actinomycetes</taxon>
        <taxon>Frankiales</taxon>
        <taxon>Frankiaceae</taxon>
        <taxon>Parafrankia</taxon>
    </lineage>
</organism>
<sequence length="703" mass="75717">MSVDERGLAADERGLAADEVGLAADERGRAAELARELEEHAYRYYVLDKPTVADAEYDALMRELEAIEERHPELRTPDSPTQKVAGSYSTLFTPVEHLERLLSLDNVFTDEEFHAWAARAAREQPVTAWLCELKIDGLAVDLVYEGGRLVRAATRGDGRTGEDITPNVRTLASVPSRLRGPAVPELLEVRGEVFFPTERFTELNAALVEAGKAPFANPRNAAAGSLRQKDPRVTASRPLDMIVHGLGAHQGFDVASQSGAYARLAELGLPVSARHEVLASVEDVLAFVRRWGEHRHDVEHEIDGVVVKVDDFGQQRRLGATSKAPRWAVAFKYPPEEVTTRLRDIQVNVGRTGRVTPFGVLEPVKVAGSTVAMATLHNIDEVGRKGVLIGDTVVLRKAGDVIPEIVSPVVDLRDGSERAFVMPTHCPECGTQLVRPEGEVDIRCPNTVSCPAQLRESVFHLASRGALDIDGLGYETATVLLAEGRIHDIGDVFHLAPESFEGLRGFADKKIEQILRGLEAARDRPLWRLLVGLSIRHVGPTAARGLARELRSLDAIATAPAERLAAVDGVGPKIADAVVDWFADPRHRDIVARIASGGVRLADEGAGEGPGPLDGVVVVITGTLDGWSRDTATEAVQSRGGKVTGSVSKKTTFVVAGADPGASKYDKARTLKIPLLDEAGFAVLLRDGADAARALAVPEEVDG</sequence>
<dbReference type="EC" id="6.5.1.2" evidence="1"/>
<dbReference type="EMBL" id="CP000820">
    <property type="protein sequence ID" value="ABW10538.1"/>
    <property type="molecule type" value="Genomic_DNA"/>
</dbReference>
<dbReference type="RefSeq" id="WP_020458719.1">
    <property type="nucleotide sequence ID" value="NC_009921.1"/>
</dbReference>
<dbReference type="SMR" id="A8L538"/>
<dbReference type="STRING" id="298653.Franean1_1082"/>
<dbReference type="KEGG" id="fre:Franean1_1082"/>
<dbReference type="eggNOG" id="COG0272">
    <property type="taxonomic scope" value="Bacteria"/>
</dbReference>
<dbReference type="HOGENOM" id="CLU_007764_2_1_11"/>
<dbReference type="GO" id="GO:0005829">
    <property type="term" value="C:cytosol"/>
    <property type="evidence" value="ECO:0007669"/>
    <property type="project" value="TreeGrafter"/>
</dbReference>
<dbReference type="GO" id="GO:0003677">
    <property type="term" value="F:DNA binding"/>
    <property type="evidence" value="ECO:0007669"/>
    <property type="project" value="InterPro"/>
</dbReference>
<dbReference type="GO" id="GO:0003911">
    <property type="term" value="F:DNA ligase (NAD+) activity"/>
    <property type="evidence" value="ECO:0007669"/>
    <property type="project" value="UniProtKB-UniRule"/>
</dbReference>
<dbReference type="GO" id="GO:0046872">
    <property type="term" value="F:metal ion binding"/>
    <property type="evidence" value="ECO:0007669"/>
    <property type="project" value="UniProtKB-KW"/>
</dbReference>
<dbReference type="GO" id="GO:0006281">
    <property type="term" value="P:DNA repair"/>
    <property type="evidence" value="ECO:0007669"/>
    <property type="project" value="UniProtKB-KW"/>
</dbReference>
<dbReference type="GO" id="GO:0006260">
    <property type="term" value="P:DNA replication"/>
    <property type="evidence" value="ECO:0007669"/>
    <property type="project" value="UniProtKB-KW"/>
</dbReference>
<dbReference type="CDD" id="cd00114">
    <property type="entry name" value="LIGANc"/>
    <property type="match status" value="1"/>
</dbReference>
<dbReference type="FunFam" id="1.10.150.20:FF:000006">
    <property type="entry name" value="DNA ligase"/>
    <property type="match status" value="1"/>
</dbReference>
<dbReference type="FunFam" id="1.10.287.610:FF:000002">
    <property type="entry name" value="DNA ligase"/>
    <property type="match status" value="1"/>
</dbReference>
<dbReference type="FunFam" id="2.40.50.140:FF:000012">
    <property type="entry name" value="DNA ligase"/>
    <property type="match status" value="1"/>
</dbReference>
<dbReference type="FunFam" id="3.30.470.30:FF:000001">
    <property type="entry name" value="DNA ligase"/>
    <property type="match status" value="1"/>
</dbReference>
<dbReference type="Gene3D" id="6.20.10.30">
    <property type="match status" value="1"/>
</dbReference>
<dbReference type="Gene3D" id="1.10.150.20">
    <property type="entry name" value="5' to 3' exonuclease, C-terminal subdomain"/>
    <property type="match status" value="2"/>
</dbReference>
<dbReference type="Gene3D" id="3.40.50.10190">
    <property type="entry name" value="BRCT domain"/>
    <property type="match status" value="1"/>
</dbReference>
<dbReference type="Gene3D" id="3.30.470.30">
    <property type="entry name" value="DNA ligase/mRNA capping enzyme"/>
    <property type="match status" value="1"/>
</dbReference>
<dbReference type="Gene3D" id="1.10.287.610">
    <property type="entry name" value="Helix hairpin bin"/>
    <property type="match status" value="1"/>
</dbReference>
<dbReference type="Gene3D" id="2.40.50.140">
    <property type="entry name" value="Nucleic acid-binding proteins"/>
    <property type="match status" value="1"/>
</dbReference>
<dbReference type="HAMAP" id="MF_01588">
    <property type="entry name" value="DNA_ligase_A"/>
    <property type="match status" value="1"/>
</dbReference>
<dbReference type="InterPro" id="IPR001357">
    <property type="entry name" value="BRCT_dom"/>
</dbReference>
<dbReference type="InterPro" id="IPR036420">
    <property type="entry name" value="BRCT_dom_sf"/>
</dbReference>
<dbReference type="InterPro" id="IPR041663">
    <property type="entry name" value="DisA/LigA_HHH"/>
</dbReference>
<dbReference type="InterPro" id="IPR001679">
    <property type="entry name" value="DNA_ligase"/>
</dbReference>
<dbReference type="InterPro" id="IPR018239">
    <property type="entry name" value="DNA_ligase_AS"/>
</dbReference>
<dbReference type="InterPro" id="IPR033136">
    <property type="entry name" value="DNA_ligase_CS"/>
</dbReference>
<dbReference type="InterPro" id="IPR013839">
    <property type="entry name" value="DNAligase_adenylation"/>
</dbReference>
<dbReference type="InterPro" id="IPR013840">
    <property type="entry name" value="DNAligase_N"/>
</dbReference>
<dbReference type="InterPro" id="IPR003583">
    <property type="entry name" value="Hlx-hairpin-Hlx_DNA-bd_motif"/>
</dbReference>
<dbReference type="InterPro" id="IPR012340">
    <property type="entry name" value="NA-bd_OB-fold"/>
</dbReference>
<dbReference type="InterPro" id="IPR004150">
    <property type="entry name" value="NAD_DNA_ligase_OB"/>
</dbReference>
<dbReference type="InterPro" id="IPR010994">
    <property type="entry name" value="RuvA_2-like"/>
</dbReference>
<dbReference type="InterPro" id="IPR004149">
    <property type="entry name" value="Znf_DNAligase_C4"/>
</dbReference>
<dbReference type="NCBIfam" id="TIGR00575">
    <property type="entry name" value="dnlj"/>
    <property type="match status" value="1"/>
</dbReference>
<dbReference type="NCBIfam" id="NF005932">
    <property type="entry name" value="PRK07956.1"/>
    <property type="match status" value="1"/>
</dbReference>
<dbReference type="PANTHER" id="PTHR23389">
    <property type="entry name" value="CHROMOSOME TRANSMISSION FIDELITY FACTOR 18"/>
    <property type="match status" value="1"/>
</dbReference>
<dbReference type="PANTHER" id="PTHR23389:SF9">
    <property type="entry name" value="DNA LIGASE"/>
    <property type="match status" value="1"/>
</dbReference>
<dbReference type="Pfam" id="PF00533">
    <property type="entry name" value="BRCT"/>
    <property type="match status" value="1"/>
</dbReference>
<dbReference type="Pfam" id="PF01653">
    <property type="entry name" value="DNA_ligase_aden"/>
    <property type="match status" value="1"/>
</dbReference>
<dbReference type="Pfam" id="PF03120">
    <property type="entry name" value="DNA_ligase_OB"/>
    <property type="match status" value="1"/>
</dbReference>
<dbReference type="Pfam" id="PF03119">
    <property type="entry name" value="DNA_ligase_ZBD"/>
    <property type="match status" value="1"/>
</dbReference>
<dbReference type="Pfam" id="PF12826">
    <property type="entry name" value="HHH_2"/>
    <property type="match status" value="1"/>
</dbReference>
<dbReference type="Pfam" id="PF14520">
    <property type="entry name" value="HHH_5"/>
    <property type="match status" value="1"/>
</dbReference>
<dbReference type="Pfam" id="PF22745">
    <property type="entry name" value="Nlig-Ia"/>
    <property type="match status" value="1"/>
</dbReference>
<dbReference type="PIRSF" id="PIRSF001604">
    <property type="entry name" value="LigA"/>
    <property type="match status" value="1"/>
</dbReference>
<dbReference type="SMART" id="SM00292">
    <property type="entry name" value="BRCT"/>
    <property type="match status" value="1"/>
</dbReference>
<dbReference type="SMART" id="SM00278">
    <property type="entry name" value="HhH1"/>
    <property type="match status" value="3"/>
</dbReference>
<dbReference type="SMART" id="SM00532">
    <property type="entry name" value="LIGANc"/>
    <property type="match status" value="1"/>
</dbReference>
<dbReference type="SUPFAM" id="SSF52113">
    <property type="entry name" value="BRCT domain"/>
    <property type="match status" value="1"/>
</dbReference>
<dbReference type="SUPFAM" id="SSF56091">
    <property type="entry name" value="DNA ligase/mRNA capping enzyme, catalytic domain"/>
    <property type="match status" value="1"/>
</dbReference>
<dbReference type="SUPFAM" id="SSF50249">
    <property type="entry name" value="Nucleic acid-binding proteins"/>
    <property type="match status" value="1"/>
</dbReference>
<dbReference type="SUPFAM" id="SSF47781">
    <property type="entry name" value="RuvA domain 2-like"/>
    <property type="match status" value="1"/>
</dbReference>
<dbReference type="PROSITE" id="PS50172">
    <property type="entry name" value="BRCT"/>
    <property type="match status" value="1"/>
</dbReference>
<dbReference type="PROSITE" id="PS01055">
    <property type="entry name" value="DNA_LIGASE_N1"/>
    <property type="match status" value="1"/>
</dbReference>
<dbReference type="PROSITE" id="PS01056">
    <property type="entry name" value="DNA_LIGASE_N2"/>
    <property type="match status" value="1"/>
</dbReference>
<accession>A8L538</accession>
<proteinExistence type="inferred from homology"/>
<feature type="chain" id="PRO_0000380385" description="DNA ligase">
    <location>
        <begin position="1"/>
        <end position="703"/>
    </location>
</feature>
<feature type="domain" description="BRCT" evidence="1">
    <location>
        <begin position="608"/>
        <end position="698"/>
    </location>
</feature>
<feature type="active site" description="N6-AMP-lysine intermediate" evidence="1">
    <location>
        <position position="134"/>
    </location>
</feature>
<feature type="binding site" evidence="1">
    <location>
        <begin position="54"/>
        <end position="58"/>
    </location>
    <ligand>
        <name>NAD(+)</name>
        <dbReference type="ChEBI" id="CHEBI:57540"/>
    </ligand>
</feature>
<feature type="binding site" evidence="1">
    <location>
        <begin position="103"/>
        <end position="104"/>
    </location>
    <ligand>
        <name>NAD(+)</name>
        <dbReference type="ChEBI" id="CHEBI:57540"/>
    </ligand>
</feature>
<feature type="binding site" evidence="1">
    <location>
        <position position="132"/>
    </location>
    <ligand>
        <name>NAD(+)</name>
        <dbReference type="ChEBI" id="CHEBI:57540"/>
    </ligand>
</feature>
<feature type="binding site" evidence="1">
    <location>
        <position position="155"/>
    </location>
    <ligand>
        <name>NAD(+)</name>
        <dbReference type="ChEBI" id="CHEBI:57540"/>
    </ligand>
</feature>
<feature type="binding site" evidence="1">
    <location>
        <position position="192"/>
    </location>
    <ligand>
        <name>NAD(+)</name>
        <dbReference type="ChEBI" id="CHEBI:57540"/>
    </ligand>
</feature>
<feature type="binding site" evidence="1">
    <location>
        <position position="308"/>
    </location>
    <ligand>
        <name>NAD(+)</name>
        <dbReference type="ChEBI" id="CHEBI:57540"/>
    </ligand>
</feature>
<feature type="binding site" evidence="1">
    <location>
        <position position="332"/>
    </location>
    <ligand>
        <name>NAD(+)</name>
        <dbReference type="ChEBI" id="CHEBI:57540"/>
    </ligand>
</feature>
<feature type="binding site" evidence="1">
    <location>
        <position position="426"/>
    </location>
    <ligand>
        <name>Zn(2+)</name>
        <dbReference type="ChEBI" id="CHEBI:29105"/>
    </ligand>
</feature>
<feature type="binding site" evidence="1">
    <location>
        <position position="429"/>
    </location>
    <ligand>
        <name>Zn(2+)</name>
        <dbReference type="ChEBI" id="CHEBI:29105"/>
    </ligand>
</feature>
<feature type="binding site" evidence="1">
    <location>
        <position position="444"/>
    </location>
    <ligand>
        <name>Zn(2+)</name>
        <dbReference type="ChEBI" id="CHEBI:29105"/>
    </ligand>
</feature>
<feature type="binding site" evidence="1">
    <location>
        <position position="450"/>
    </location>
    <ligand>
        <name>Zn(2+)</name>
        <dbReference type="ChEBI" id="CHEBI:29105"/>
    </ligand>
</feature>